<proteinExistence type="inferred from homology"/>
<accession>Q07135</accession>
<keyword id="KW-0007">Acetylation</keyword>
<keyword id="KW-0158">Chromosome</keyword>
<keyword id="KW-0238">DNA-binding</keyword>
<keyword id="KW-1017">Isopeptide bond</keyword>
<keyword id="KW-0544">Nucleosome core</keyword>
<keyword id="KW-0539">Nucleus</keyword>
<keyword id="KW-0597">Phosphoprotein</keyword>
<keyword id="KW-0832">Ubl conjugation</keyword>
<evidence type="ECO:0000250" key="1"/>
<evidence type="ECO:0000256" key="2">
    <source>
        <dbReference type="SAM" id="MobiDB-lite"/>
    </source>
</evidence>
<evidence type="ECO:0000305" key="3"/>
<feature type="initiator methionine" description="Removed" evidence="1">
    <location>
        <position position="1"/>
    </location>
</feature>
<feature type="chain" id="PRO_0000055217" description="Histone H2A, orphon">
    <location>
        <begin position="2"/>
        <end position="125"/>
    </location>
</feature>
<feature type="region of interest" description="Disordered" evidence="2">
    <location>
        <begin position="1"/>
        <end position="21"/>
    </location>
</feature>
<feature type="compositionally biased region" description="Basic residues" evidence="2">
    <location>
        <begin position="1"/>
        <end position="18"/>
    </location>
</feature>
<feature type="modified residue" description="N-acetylserine" evidence="1">
    <location>
        <position position="2"/>
    </location>
</feature>
<feature type="modified residue" description="Phosphoserine" evidence="1">
    <location>
        <position position="2"/>
    </location>
</feature>
<feature type="cross-link" description="Glycyl lysine isopeptide (Lys-Gly) (interchain with G-Cter in ubiquitin)" evidence="1">
    <location>
        <position position="119"/>
    </location>
</feature>
<comment type="function">
    <text>Core component of nucleosome. Nucleosomes wrap and compact DNA into chromatin, limiting DNA accessibility to the cellular machineries which require DNA as a template. Histones thereby play a central role in transcription regulation, DNA repair, DNA replication and chromosomal stability. DNA accessibility is regulated via a complex set of post-translational modifications of histones, also called histone code, and nucleosome remodeling.</text>
</comment>
<comment type="subunit">
    <text>The nucleosome is a histone octamer containing two molecules each of H2A, H2B, H3 and H4 assembled in one H3-H4 heterotetramer and two H2A-H2B heterodimers. The octamer wraps approximately 147 bp of DNA.</text>
</comment>
<comment type="subcellular location">
    <subcellularLocation>
        <location>Nucleus</location>
    </subcellularLocation>
    <subcellularLocation>
        <location>Chromosome</location>
    </subcellularLocation>
</comment>
<comment type="PTM">
    <text evidence="1">Monoubiquitination of Lys-119 gives a specific tag for epigenetic transcriptional repression.</text>
</comment>
<comment type="PTM">
    <text evidence="1">Phosphorylation on Ser-2 is enhanced during mitosis. Phosphorylation on Ser-2 directly represses transcription (By similarity).</text>
</comment>
<comment type="similarity">
    <text evidence="3">Belongs to the histone H2A family.</text>
</comment>
<organism>
    <name type="scientific">Chironomus thummi thummi</name>
    <name type="common">Midge</name>
    <dbReference type="NCBI Taxonomy" id="7155"/>
    <lineage>
        <taxon>Eukaryota</taxon>
        <taxon>Metazoa</taxon>
        <taxon>Ecdysozoa</taxon>
        <taxon>Arthropoda</taxon>
        <taxon>Hexapoda</taxon>
        <taxon>Insecta</taxon>
        <taxon>Pterygota</taxon>
        <taxon>Neoptera</taxon>
        <taxon>Endopterygota</taxon>
        <taxon>Diptera</taxon>
        <taxon>Nematocera</taxon>
        <taxon>Chironomoidea</taxon>
        <taxon>Chironomidae</taxon>
        <taxon>Chironominae</taxon>
        <taxon>Chironomus</taxon>
    </lineage>
</organism>
<protein>
    <recommendedName>
        <fullName>Histone H2A, orphon</fullName>
    </recommendedName>
</protein>
<sequence>MSGRGKGGKVKAKAKSRSSRAGLQFPVGRIHRLLRKGHYAERIGAGAPVYLAAVMEYLGAEILELAGNAARDNKKTRIIPRHLQLAIRNDEELNKLLSGVTIAQGGVLPNIQAVLLPKKTESKKA</sequence>
<reference key="1">
    <citation type="journal article" date="1993" name="J. Mol. Biol.">
        <title>Divergent evolution of an 'orphon' histone gene cluster in Chironomus.</title>
        <authorList>
            <person name="Hankeln T."/>
            <person name="Schmidt E.R."/>
        </authorList>
    </citation>
    <scope>NUCLEOTIDE SEQUENCE [GENOMIC DNA]</scope>
</reference>
<dbReference type="EMBL" id="X72803">
    <property type="protein sequence ID" value="CAA51321.1"/>
    <property type="molecule type" value="Genomic_DNA"/>
</dbReference>
<dbReference type="PIR" id="S40435">
    <property type="entry name" value="S40435"/>
</dbReference>
<dbReference type="SMR" id="Q07135"/>
<dbReference type="GO" id="GO:0000786">
    <property type="term" value="C:nucleosome"/>
    <property type="evidence" value="ECO:0007669"/>
    <property type="project" value="UniProtKB-KW"/>
</dbReference>
<dbReference type="GO" id="GO:0005634">
    <property type="term" value="C:nucleus"/>
    <property type="evidence" value="ECO:0007669"/>
    <property type="project" value="UniProtKB-SubCell"/>
</dbReference>
<dbReference type="GO" id="GO:0003677">
    <property type="term" value="F:DNA binding"/>
    <property type="evidence" value="ECO:0007669"/>
    <property type="project" value="UniProtKB-KW"/>
</dbReference>
<dbReference type="GO" id="GO:0046982">
    <property type="term" value="F:protein heterodimerization activity"/>
    <property type="evidence" value="ECO:0007669"/>
    <property type="project" value="InterPro"/>
</dbReference>
<dbReference type="GO" id="GO:0030527">
    <property type="term" value="F:structural constituent of chromatin"/>
    <property type="evidence" value="ECO:0007669"/>
    <property type="project" value="InterPro"/>
</dbReference>
<dbReference type="CDD" id="cd00074">
    <property type="entry name" value="HFD_H2A"/>
    <property type="match status" value="1"/>
</dbReference>
<dbReference type="FunFam" id="1.10.20.10:FF:000020">
    <property type="entry name" value="Histone H2A"/>
    <property type="match status" value="1"/>
</dbReference>
<dbReference type="Gene3D" id="1.10.20.10">
    <property type="entry name" value="Histone, subunit A"/>
    <property type="match status" value="1"/>
</dbReference>
<dbReference type="InterPro" id="IPR009072">
    <property type="entry name" value="Histone-fold"/>
</dbReference>
<dbReference type="InterPro" id="IPR002119">
    <property type="entry name" value="Histone_H2A"/>
</dbReference>
<dbReference type="InterPro" id="IPR007125">
    <property type="entry name" value="Histone_H2A/H2B/H3"/>
</dbReference>
<dbReference type="InterPro" id="IPR032454">
    <property type="entry name" value="Histone_H2A_C"/>
</dbReference>
<dbReference type="InterPro" id="IPR032458">
    <property type="entry name" value="Histone_H2A_CS"/>
</dbReference>
<dbReference type="PANTHER" id="PTHR23430">
    <property type="entry name" value="HISTONE H2A"/>
    <property type="match status" value="1"/>
</dbReference>
<dbReference type="Pfam" id="PF00125">
    <property type="entry name" value="Histone"/>
    <property type="match status" value="1"/>
</dbReference>
<dbReference type="Pfam" id="PF16211">
    <property type="entry name" value="Histone_H2A_C"/>
    <property type="match status" value="1"/>
</dbReference>
<dbReference type="PRINTS" id="PR00620">
    <property type="entry name" value="HISTONEH2A"/>
</dbReference>
<dbReference type="SMART" id="SM00414">
    <property type="entry name" value="H2A"/>
    <property type="match status" value="1"/>
</dbReference>
<dbReference type="SUPFAM" id="SSF47113">
    <property type="entry name" value="Histone-fold"/>
    <property type="match status" value="1"/>
</dbReference>
<dbReference type="PROSITE" id="PS00046">
    <property type="entry name" value="HISTONE_H2A"/>
    <property type="match status" value="1"/>
</dbReference>
<name>H2AO_CHITH</name>